<reference key="1">
    <citation type="journal article" date="2010" name="J. Bacteriol.">
        <title>Genome sequence of the Fleming strain of Micrococcus luteus, a simple free-living actinobacterium.</title>
        <authorList>
            <person name="Young M."/>
            <person name="Artsatbanov V."/>
            <person name="Beller H.R."/>
            <person name="Chandra G."/>
            <person name="Chater K.F."/>
            <person name="Dover L.G."/>
            <person name="Goh E.B."/>
            <person name="Kahan T."/>
            <person name="Kaprelyants A.S."/>
            <person name="Kyrpides N."/>
            <person name="Lapidus A."/>
            <person name="Lowry S.R."/>
            <person name="Lykidis A."/>
            <person name="Mahillon J."/>
            <person name="Markowitz V."/>
            <person name="Mavromatis K."/>
            <person name="Mukamolova G.V."/>
            <person name="Oren A."/>
            <person name="Rokem J.S."/>
            <person name="Smith M.C."/>
            <person name="Young D.I."/>
            <person name="Greenblatt C.L."/>
        </authorList>
    </citation>
    <scope>NUCLEOTIDE SEQUENCE [LARGE SCALE GENOMIC DNA]</scope>
    <source>
        <strain>ATCC 4698 / DSM 20030 / JCM 1464 / CCM 169 / CCUG 5858 / IAM 1056 / NBRC 3333 / NCIMB 9278 / NCTC 2665 / VKM Ac-2230</strain>
    </source>
</reference>
<feature type="chain" id="PRO_1000204351" description="Ribonuclease P protein component">
    <location>
        <begin position="1"/>
        <end position="132"/>
    </location>
</feature>
<name>RNPA_MICLC</name>
<proteinExistence type="inferred from homology"/>
<keyword id="KW-0255">Endonuclease</keyword>
<keyword id="KW-0378">Hydrolase</keyword>
<keyword id="KW-0540">Nuclease</keyword>
<keyword id="KW-1185">Reference proteome</keyword>
<keyword id="KW-0694">RNA-binding</keyword>
<keyword id="KW-0819">tRNA processing</keyword>
<gene>
    <name evidence="1" type="primary">rnpA</name>
    <name type="ordered locus">Mlut_23470</name>
</gene>
<accession>C5C7X2</accession>
<sequence>MLPRDRRVRTPAEFRHLGRTGTRAGRRTVVVSVATDPDQTRSTSPSAPRPRAGFVVSKAVGNAVTRNRVKRRLRAVVAEQMRLPPLRDLPVLVQVRALPAAAEADYALLRRETVGALGKALKPHLPAASEHA</sequence>
<comment type="function">
    <text evidence="1">RNaseP catalyzes the removal of the 5'-leader sequence from pre-tRNA to produce the mature 5'-terminus. It can also cleave other RNA substrates such as 4.5S RNA. The protein component plays an auxiliary but essential role in vivo by binding to the 5'-leader sequence and broadening the substrate specificity of the ribozyme.</text>
</comment>
<comment type="catalytic activity">
    <reaction evidence="1">
        <text>Endonucleolytic cleavage of RNA, removing 5'-extranucleotides from tRNA precursor.</text>
        <dbReference type="EC" id="3.1.26.5"/>
    </reaction>
</comment>
<comment type="subunit">
    <text evidence="1">Consists of a catalytic RNA component (M1 or rnpB) and a protein subunit.</text>
</comment>
<comment type="similarity">
    <text evidence="1">Belongs to the RnpA family.</text>
</comment>
<protein>
    <recommendedName>
        <fullName evidence="1">Ribonuclease P protein component</fullName>
        <shortName evidence="1">RNase P protein</shortName>
        <shortName evidence="1">RNaseP protein</shortName>
        <ecNumber evidence="1">3.1.26.5</ecNumber>
    </recommendedName>
    <alternativeName>
        <fullName evidence="1">Protein C5</fullName>
    </alternativeName>
</protein>
<dbReference type="EC" id="3.1.26.5" evidence="1"/>
<dbReference type="EMBL" id="CP001628">
    <property type="protein sequence ID" value="ACS31810.1"/>
    <property type="molecule type" value="Genomic_DNA"/>
</dbReference>
<dbReference type="RefSeq" id="WP_010079776.1">
    <property type="nucleotide sequence ID" value="NC_012803.1"/>
</dbReference>
<dbReference type="SMR" id="C5C7X2"/>
<dbReference type="STRING" id="465515.Mlut_23470"/>
<dbReference type="EnsemblBacteria" id="ACS31810">
    <property type="protein sequence ID" value="ACS31810"/>
    <property type="gene ID" value="Mlut_23470"/>
</dbReference>
<dbReference type="GeneID" id="93344188"/>
<dbReference type="KEGG" id="mlu:Mlut_23470"/>
<dbReference type="eggNOG" id="COG0594">
    <property type="taxonomic scope" value="Bacteria"/>
</dbReference>
<dbReference type="HOGENOM" id="CLU_117179_4_1_11"/>
<dbReference type="Proteomes" id="UP000000738">
    <property type="component" value="Chromosome"/>
</dbReference>
<dbReference type="GO" id="GO:0030677">
    <property type="term" value="C:ribonuclease P complex"/>
    <property type="evidence" value="ECO:0007669"/>
    <property type="project" value="TreeGrafter"/>
</dbReference>
<dbReference type="GO" id="GO:0042781">
    <property type="term" value="F:3'-tRNA processing endoribonuclease activity"/>
    <property type="evidence" value="ECO:0007669"/>
    <property type="project" value="TreeGrafter"/>
</dbReference>
<dbReference type="GO" id="GO:0004526">
    <property type="term" value="F:ribonuclease P activity"/>
    <property type="evidence" value="ECO:0007669"/>
    <property type="project" value="UniProtKB-UniRule"/>
</dbReference>
<dbReference type="GO" id="GO:0000049">
    <property type="term" value="F:tRNA binding"/>
    <property type="evidence" value="ECO:0007669"/>
    <property type="project" value="UniProtKB-UniRule"/>
</dbReference>
<dbReference type="GO" id="GO:0001682">
    <property type="term" value="P:tRNA 5'-leader removal"/>
    <property type="evidence" value="ECO:0007669"/>
    <property type="project" value="UniProtKB-UniRule"/>
</dbReference>
<dbReference type="Gene3D" id="3.30.230.10">
    <property type="match status" value="1"/>
</dbReference>
<dbReference type="HAMAP" id="MF_00227">
    <property type="entry name" value="RNase_P"/>
    <property type="match status" value="1"/>
</dbReference>
<dbReference type="InterPro" id="IPR020568">
    <property type="entry name" value="Ribosomal_Su5_D2-typ_SF"/>
</dbReference>
<dbReference type="InterPro" id="IPR014721">
    <property type="entry name" value="Ribsml_uS5_D2-typ_fold_subgr"/>
</dbReference>
<dbReference type="InterPro" id="IPR000100">
    <property type="entry name" value="RNase_P"/>
</dbReference>
<dbReference type="InterPro" id="IPR020539">
    <property type="entry name" value="RNase_P_CS"/>
</dbReference>
<dbReference type="NCBIfam" id="TIGR00188">
    <property type="entry name" value="rnpA"/>
    <property type="match status" value="1"/>
</dbReference>
<dbReference type="PANTHER" id="PTHR33992">
    <property type="entry name" value="RIBONUCLEASE P PROTEIN COMPONENT"/>
    <property type="match status" value="1"/>
</dbReference>
<dbReference type="PANTHER" id="PTHR33992:SF1">
    <property type="entry name" value="RIBONUCLEASE P PROTEIN COMPONENT"/>
    <property type="match status" value="1"/>
</dbReference>
<dbReference type="Pfam" id="PF00825">
    <property type="entry name" value="Ribonuclease_P"/>
    <property type="match status" value="1"/>
</dbReference>
<dbReference type="SUPFAM" id="SSF54211">
    <property type="entry name" value="Ribosomal protein S5 domain 2-like"/>
    <property type="match status" value="1"/>
</dbReference>
<dbReference type="PROSITE" id="PS00648">
    <property type="entry name" value="RIBONUCLEASE_P"/>
    <property type="match status" value="1"/>
</dbReference>
<organism>
    <name type="scientific">Micrococcus luteus (strain ATCC 4698 / DSM 20030 / JCM 1464 / CCM 169 / CCUG 5858 / IAM 1056 / NBRC 3333 / NCIMB 9278 / NCTC 2665 / VKM Ac-2230)</name>
    <name type="common">Micrococcus lysodeikticus</name>
    <dbReference type="NCBI Taxonomy" id="465515"/>
    <lineage>
        <taxon>Bacteria</taxon>
        <taxon>Bacillati</taxon>
        <taxon>Actinomycetota</taxon>
        <taxon>Actinomycetes</taxon>
        <taxon>Micrococcales</taxon>
        <taxon>Micrococcaceae</taxon>
        <taxon>Micrococcus</taxon>
    </lineage>
</organism>
<evidence type="ECO:0000255" key="1">
    <source>
        <dbReference type="HAMAP-Rule" id="MF_00227"/>
    </source>
</evidence>